<evidence type="ECO:0000250" key="1">
    <source>
        <dbReference type="UniProtKB" id="G4N137"/>
    </source>
</evidence>
<evidence type="ECO:0000255" key="2"/>
<evidence type="ECO:0000255" key="3">
    <source>
        <dbReference type="PROSITE-ProRule" id="PRU00258"/>
    </source>
</evidence>
<evidence type="ECO:0000255" key="4">
    <source>
        <dbReference type="PROSITE-ProRule" id="PRU01348"/>
    </source>
</evidence>
<evidence type="ECO:0000256" key="5">
    <source>
        <dbReference type="SAM" id="MobiDB-lite"/>
    </source>
</evidence>
<evidence type="ECO:0000269" key="6">
    <source>
    </source>
</evidence>
<evidence type="ECO:0000303" key="7">
    <source>
    </source>
</evidence>
<evidence type="ECO:0000305" key="8"/>
<evidence type="ECO:0000305" key="9">
    <source>
    </source>
</evidence>
<feature type="chain" id="PRO_0000460256" description="Hybrid PKS-NRPS synthetase TAS1">
    <location>
        <begin position="1"/>
        <end position="1558"/>
    </location>
</feature>
<feature type="domain" description="Carrier" evidence="3">
    <location>
        <begin position="1027"/>
        <end position="1104"/>
    </location>
</feature>
<feature type="domain" description="Ketosynthase family 3 (KS3)" evidence="4">
    <location>
        <begin position="1145"/>
        <end position="1558"/>
    </location>
</feature>
<feature type="region of interest" description="Condensation (C) domain" evidence="1 2">
    <location>
        <begin position="27"/>
        <end position="392"/>
    </location>
</feature>
<feature type="region of interest" description="Adenylation (A) domain" evidence="2 9">
    <location>
        <begin position="522"/>
        <end position="919"/>
    </location>
</feature>
<feature type="region of interest" description="Disordered" evidence="5">
    <location>
        <begin position="995"/>
        <end position="1028"/>
    </location>
</feature>
<feature type="region of interest" description="Disordered" evidence="5">
    <location>
        <begin position="1116"/>
        <end position="1144"/>
    </location>
</feature>
<feature type="compositionally biased region" description="Polar residues" evidence="5">
    <location>
        <begin position="1131"/>
        <end position="1140"/>
    </location>
</feature>
<feature type="active site" description="For beta-ketoacyl synthase activity" evidence="4">
    <location>
        <position position="1308"/>
    </location>
</feature>
<feature type="active site" description="For beta-ketoacyl synthase activity" evidence="4">
    <location>
        <position position="1444"/>
    </location>
</feature>
<feature type="active site" description="For beta-ketoacyl synthase activity" evidence="4">
    <location>
        <position position="1484"/>
    </location>
</feature>
<feature type="modified residue" description="O-(pantetheine 4'-phosphoryl)serine" evidence="3">
    <location>
        <position position="1063"/>
    </location>
</feature>
<comment type="function">
    <text evidence="6">Hybrid PKS-NRPS synthetase that mediates the biosynthesis of the toxin tenuazonic acid (TeA), an inhibitor of protein biosynthesis on ribosomes by suppressing the release of new protein. TAS1 alone is sufficient for TeA synthesis via the condensation of isoleucine (Ile) with acetoacetyl-CoA by the N-terminal NRPS module and subsequent cyclization conducted by the C-terminal KS domain.</text>
</comment>
<comment type="catalytic activity">
    <reaction evidence="6">
        <text>acetoacetyl-CoA + L-isoleucine + ATP = tenuazonic acid + AMP + diphosphate + CoA + 2 H(+)</text>
        <dbReference type="Rhea" id="RHEA:52800"/>
        <dbReference type="ChEBI" id="CHEBI:15378"/>
        <dbReference type="ChEBI" id="CHEBI:30616"/>
        <dbReference type="ChEBI" id="CHEBI:33019"/>
        <dbReference type="ChEBI" id="CHEBI:57286"/>
        <dbReference type="ChEBI" id="CHEBI:57287"/>
        <dbReference type="ChEBI" id="CHEBI:58045"/>
        <dbReference type="ChEBI" id="CHEBI:136842"/>
        <dbReference type="ChEBI" id="CHEBI:456215"/>
        <dbReference type="EC" id="6.3.2.50"/>
    </reaction>
    <physiologicalReaction direction="left-to-right" evidence="6">
        <dbReference type="Rhea" id="RHEA:52801"/>
    </physiologicalReaction>
</comment>
<comment type="cofactor">
    <cofactor evidence="3">
        <name>pantetheine 4'-phosphate</name>
        <dbReference type="ChEBI" id="CHEBI:47942"/>
    </cofactor>
</comment>
<comment type="domain">
    <text evidence="6">TAS1 has the following domain architecture: C-A-T-T-KS-TE. The N-terminal NRPS module contains the condensation (C), adenylation (A), and thiolation (T) domains and catalyzes the formation of the amide linkage between the isoleucine (Ile) with acetoacetyl-CoA. The ketosynthase (KS) domain and this domain in the PKS portion of TAS1 is indispensable for TAS1 activity by conducting the final cyclization step for tenuazonic acid release. The TE domain appears to be not required for the cyclization reaction for tenuazonic acid biosynthesis because the KS domain contains all the catalytic residues (Cys, His, Ser) proposed to be involved in the cyclization reaction.</text>
</comment>
<comment type="similarity">
    <text evidence="8">In the N-terminal section; belongs to the NRP synthetase family.</text>
</comment>
<accession>S7RK07</accession>
<reference key="1">
    <citation type="journal article" date="2012" name="Science">
        <title>The Paleozoic origin of enzymatic lignin decomposition reconstructed from 31 fungal genomes.</title>
        <authorList>
            <person name="Floudas D."/>
            <person name="Binder M."/>
            <person name="Riley R."/>
            <person name="Barry K."/>
            <person name="Blanchette R.A."/>
            <person name="Henrissat B."/>
            <person name="Martinez A.T."/>
            <person name="Otillar R."/>
            <person name="Spatafora J.W."/>
            <person name="Yadav J.S."/>
            <person name="Aerts A."/>
            <person name="Benoit I."/>
            <person name="Boyd A."/>
            <person name="Carlson A."/>
            <person name="Copeland A."/>
            <person name="Coutinho P.M."/>
            <person name="de Vries R.P."/>
            <person name="Ferreira P."/>
            <person name="Findley K."/>
            <person name="Foster B."/>
            <person name="Gaskell J."/>
            <person name="Glotzer D."/>
            <person name="Gorecki P."/>
            <person name="Heitman J."/>
            <person name="Hesse C."/>
            <person name="Hori C."/>
            <person name="Igarashi K."/>
            <person name="Jurgens J.A."/>
            <person name="Kallen N."/>
            <person name="Kersten P."/>
            <person name="Kohler A."/>
            <person name="Kuees U."/>
            <person name="Kumar T.K.A."/>
            <person name="Kuo A."/>
            <person name="LaButti K."/>
            <person name="Larrondo L.F."/>
            <person name="Lindquist E."/>
            <person name="Ling A."/>
            <person name="Lombard V."/>
            <person name="Lucas S."/>
            <person name="Lundell T."/>
            <person name="Martin R."/>
            <person name="McLaughlin D.J."/>
            <person name="Morgenstern I."/>
            <person name="Morin E."/>
            <person name="Murat C."/>
            <person name="Nagy L.G."/>
            <person name="Nolan M."/>
            <person name="Ohm R.A."/>
            <person name="Patyshakuliyeva A."/>
            <person name="Rokas A."/>
            <person name="Ruiz-Duenas F.J."/>
            <person name="Sabat G."/>
            <person name="Salamov A."/>
            <person name="Samejima M."/>
            <person name="Schmutz J."/>
            <person name="Slot J.C."/>
            <person name="St John F."/>
            <person name="Stenlid J."/>
            <person name="Sun H."/>
            <person name="Sun S."/>
            <person name="Syed K."/>
            <person name="Tsang A."/>
            <person name="Wiebenga A."/>
            <person name="Young D."/>
            <person name="Pisabarro A."/>
            <person name="Eastwood D.C."/>
            <person name="Martin F."/>
            <person name="Cullen D."/>
            <person name="Grigoriev I.V."/>
            <person name="Hibbett D.S."/>
        </authorList>
    </citation>
    <scope>NUCLEOTIDE SEQUENCE [LARGE SCALE GENOMIC DNA]</scope>
    <source>
        <strain>ATCC 11539 / FP-39264 / Madison 617</strain>
    </source>
</reference>
<reference key="2">
    <citation type="journal article" date="2023" name="ACS Chem. Biol.">
        <title>Fungal NRPS-PKS Hybrid Enzymes Biosynthesize New gamma-Lactam Compounds, Taslactams A-D, Analogous to Actinomycete Proteasome Inhibitors.</title>
        <authorList>
            <person name="Motoyama T."/>
            <person name="Nogawa T."/>
            <person name="Shimizu T."/>
            <person name="Kawatani M."/>
            <person name="Kashiwa T."/>
            <person name="Yun C.S."/>
            <person name="Hashizume D."/>
            <person name="Osada H."/>
        </authorList>
    </citation>
    <scope>FUNCTION</scope>
    <scope>DOMAIN</scope>
    <scope>CATALYTIC ACTIVITY</scope>
</reference>
<organism>
    <name type="scientific">Gloeophyllum trabeum (strain ATCC 11539 / FP-39264 / Madison 617)</name>
    <name type="common">Brown rot fungus</name>
    <dbReference type="NCBI Taxonomy" id="670483"/>
    <lineage>
        <taxon>Eukaryota</taxon>
        <taxon>Fungi</taxon>
        <taxon>Dikarya</taxon>
        <taxon>Basidiomycota</taxon>
        <taxon>Agaricomycotina</taxon>
        <taxon>Agaricomycetes</taxon>
        <taxon>Gloeophyllales</taxon>
        <taxon>Gloeophyllaceae</taxon>
        <taxon>Gloeophyllum</taxon>
    </lineage>
</organism>
<protein>
    <recommendedName>
        <fullName evidence="7">Hybrid PKS-NRPS synthetase TAS1</fullName>
        <ecNumber evidence="6">6.3.2.50</ecNumber>
    </recommendedName>
    <alternativeName>
        <fullName evidence="7">Tenuazonic acid synthetase 1</fullName>
    </alternativeName>
</protein>
<keyword id="KW-0436">Ligase</keyword>
<keyword id="KW-0511">Multifunctional enzyme</keyword>
<keyword id="KW-0596">Phosphopantetheine</keyword>
<keyword id="KW-0597">Phosphoprotein</keyword>
<keyword id="KW-1185">Reference proteome</keyword>
<keyword id="KW-0808">Transferase</keyword>
<keyword id="KW-0843">Virulence</keyword>
<gene>
    <name evidence="7" type="primary">TAS1</name>
    <name type="ORF">GLOTRDRAFT_9220</name>
</gene>
<proteinExistence type="evidence at protein level"/>
<sequence length="1558" mass="168822">MQFITGPKLNGAAASTGALSPEVIAVYPMTKAQESLWLAYSMAPNHTLYNLSLKFVFNQTEAASDGSIAIRDLTRRHAILRSTFHGANQSQARPFVAEHNPDTATASFRIVPKPRDARGEAKVLGLLRTAVNLSQEFASRWLAVVSDREIELYLVAHHIALDGTSMSSISAELFKLLSGSPATPAEQPFCQAHMYEVITYIVRRFSSRRILTPFKAAFSASPEYQAAERFWLDQVMHVRPYKWITNPSSRPAPSKSYREIQTWFDFSKDDLAAWGSKYRTSWFRVAVAMVGLLTRAHTEPDYGADQTVTVAFGGRPAGLEKSIGHFANAMPIRIPFTEASRKTSGAAQVSFDNLVKLVSKQISTAKKHERYSILDLSRARASRGLETPRAQVAVTLSPKLSHKECTLYPVEGPYDLFFCFLEGDDNVTLGVIYDPIIFSTADVARLKDEFSSLRERSMTDPSFGVSGISGVQSHLPRLLPELDLSNVDEISAARFHAWFEQQALAHPNLVALHSAERNLSVTYKELNERSNRLGHYLREIGISRGSLVLLYLEHGPAVMEWIIAVLKAGAAYAVADQSNPPERIRSIVSVAEPVLVIHDQKGEAIREIIQESPVKTLDIRTVQIEKFSSESLEEVTQNTDLAYIVFTSGSTGQPKGVEIEHRNLSHFVANAFTSNYTTIGPGTRVLQLATFAFDAAVLEWSQCLSLGGTLCFADVPKALVGDYLADVIDLNEVSFMHLTPSVLATLPTSRPLPSLRQISVGGEMVPDNLIKKWRSRVQVVNAYGPTECTVVMAHQPQPIASDAPQPAANIIGAAHQHMKFYVSNDAFTRLLPAGEVGEVCIGGPQVGRGYKSRPDLTENRFAVHPELGARLYRTGDRGKLLGDGSVFLVGRIDREVKVRGDIELDDVERTITDVMPEVTAVSVQPDSSSTSLWAFVSPDDIDGDVLRNRLTERLPAYMVPSTVYALPQLPLNMNGKVDHKSIAANMESLIVEATTSGSSSSATPSLVSSGSTTCRSPSTSSCSDSRSASPAITSAVTRIWQDILGTKGLITTSDNFFDLGGNSLSANKLATQLRSEFSSSNITVLDIFSSPTIQGQVDLLCGSELDSYVQSKLDSLGRGRTKSPAKIVDSQGRSSPSTIPSGGRKSEIAIVGISGRFPGASNPDELYRLFRDRKEGISELEGSSGVLPFPGAIYVPRRGAIKDVEYFDPAAWGLKEDEARNMDPQQRLFMESTLRALQDANRVPSIQGTNNIGLFVGAARDTWQDATETVYGDEFYRTHRADLTPSISARTAYHLNLQGPNVTLNTACSSGMVALSVAVDQLRAGRCDMAVAGAVAIAFPQEGYVTAESQIFSPSGHCRPFDHRADGTLPADGVCALVLRPLDDAVRDGDKIYSVISGIATGSDGRLDKAGVTAPSPRGQADTIERAWKDAGIPMSKAVYAELHGSGTPIGDALELEGFQMARSRLGAANNRCTVGSNKGNLGNCEAASGLVSVIKMCKSMQYGVIPPVQSLERVNPLINPSLPFDIAQTDLPLSDDAVVCVSSTGLGGVNAHCVLRS</sequence>
<name>TAS1_GLOTA</name>
<dbReference type="EC" id="6.3.2.50" evidence="6"/>
<dbReference type="EMBL" id="KB469306">
    <property type="protein sequence ID" value="EPQ52969.1"/>
    <property type="molecule type" value="Genomic_DNA"/>
</dbReference>
<dbReference type="SMR" id="S7RK07"/>
<dbReference type="STRING" id="670483.S7RK07"/>
<dbReference type="KEGG" id="gtr:GLOTRDRAFT_9220"/>
<dbReference type="eggNOG" id="KOG1178">
    <property type="taxonomic scope" value="Eukaryota"/>
</dbReference>
<dbReference type="eggNOG" id="KOG1202">
    <property type="taxonomic scope" value="Eukaryota"/>
</dbReference>
<dbReference type="HOGENOM" id="CLU_003656_0_0_1"/>
<dbReference type="OMA" id="DGIGCGN"/>
<dbReference type="OrthoDB" id="408177at2759"/>
<dbReference type="Proteomes" id="UP000030669">
    <property type="component" value="Unassembled WGS sequence"/>
</dbReference>
<dbReference type="GO" id="GO:0005737">
    <property type="term" value="C:cytoplasm"/>
    <property type="evidence" value="ECO:0007669"/>
    <property type="project" value="TreeGrafter"/>
</dbReference>
<dbReference type="GO" id="GO:0004315">
    <property type="term" value="F:3-oxoacyl-[acyl-carrier-protein] synthase activity"/>
    <property type="evidence" value="ECO:0007669"/>
    <property type="project" value="InterPro"/>
</dbReference>
<dbReference type="GO" id="GO:0016874">
    <property type="term" value="F:ligase activity"/>
    <property type="evidence" value="ECO:0007669"/>
    <property type="project" value="UniProtKB-KW"/>
</dbReference>
<dbReference type="GO" id="GO:0031177">
    <property type="term" value="F:phosphopantetheine binding"/>
    <property type="evidence" value="ECO:0007669"/>
    <property type="project" value="TreeGrafter"/>
</dbReference>
<dbReference type="GO" id="GO:0043041">
    <property type="term" value="P:amino acid activation for nonribosomal peptide biosynthetic process"/>
    <property type="evidence" value="ECO:0007669"/>
    <property type="project" value="TreeGrafter"/>
</dbReference>
<dbReference type="GO" id="GO:0006633">
    <property type="term" value="P:fatty acid biosynthetic process"/>
    <property type="evidence" value="ECO:0007669"/>
    <property type="project" value="InterPro"/>
</dbReference>
<dbReference type="GO" id="GO:0044550">
    <property type="term" value="P:secondary metabolite biosynthetic process"/>
    <property type="evidence" value="ECO:0007669"/>
    <property type="project" value="TreeGrafter"/>
</dbReference>
<dbReference type="CDD" id="cd05930">
    <property type="entry name" value="A_NRPS"/>
    <property type="match status" value="1"/>
</dbReference>
<dbReference type="CDD" id="cd00833">
    <property type="entry name" value="PKS"/>
    <property type="match status" value="1"/>
</dbReference>
<dbReference type="Gene3D" id="3.30.300.30">
    <property type="match status" value="1"/>
</dbReference>
<dbReference type="Gene3D" id="3.40.47.10">
    <property type="match status" value="1"/>
</dbReference>
<dbReference type="Gene3D" id="1.10.1200.10">
    <property type="entry name" value="ACP-like"/>
    <property type="match status" value="1"/>
</dbReference>
<dbReference type="Gene3D" id="3.30.559.10">
    <property type="entry name" value="Chloramphenicol acetyltransferase-like domain"/>
    <property type="match status" value="1"/>
</dbReference>
<dbReference type="Gene3D" id="3.40.50.12780">
    <property type="entry name" value="N-terminal domain of ligase-like"/>
    <property type="match status" value="1"/>
</dbReference>
<dbReference type="Gene3D" id="3.30.559.30">
    <property type="entry name" value="Nonribosomal peptide synthetase, condensation domain"/>
    <property type="match status" value="1"/>
</dbReference>
<dbReference type="InterPro" id="IPR010071">
    <property type="entry name" value="AA_adenyl_dom"/>
</dbReference>
<dbReference type="InterPro" id="IPR036736">
    <property type="entry name" value="ACP-like_sf"/>
</dbReference>
<dbReference type="InterPro" id="IPR045851">
    <property type="entry name" value="AMP-bd_C_sf"/>
</dbReference>
<dbReference type="InterPro" id="IPR020845">
    <property type="entry name" value="AMP-binding_CS"/>
</dbReference>
<dbReference type="InterPro" id="IPR000873">
    <property type="entry name" value="AMP-dep_synth/lig_dom"/>
</dbReference>
<dbReference type="InterPro" id="IPR042099">
    <property type="entry name" value="ANL_N_sf"/>
</dbReference>
<dbReference type="InterPro" id="IPR023213">
    <property type="entry name" value="CAT-like_dom_sf"/>
</dbReference>
<dbReference type="InterPro" id="IPR001242">
    <property type="entry name" value="Condensatn"/>
</dbReference>
<dbReference type="InterPro" id="IPR018201">
    <property type="entry name" value="Ketoacyl_synth_AS"/>
</dbReference>
<dbReference type="InterPro" id="IPR014031">
    <property type="entry name" value="Ketoacyl_synth_C"/>
</dbReference>
<dbReference type="InterPro" id="IPR014030">
    <property type="entry name" value="Ketoacyl_synth_N"/>
</dbReference>
<dbReference type="InterPro" id="IPR020841">
    <property type="entry name" value="PKS_Beta-ketoAc_synthase_dom"/>
</dbReference>
<dbReference type="InterPro" id="IPR009081">
    <property type="entry name" value="PP-bd_ACP"/>
</dbReference>
<dbReference type="InterPro" id="IPR006162">
    <property type="entry name" value="Ppantetheine_attach_site"/>
</dbReference>
<dbReference type="InterPro" id="IPR016039">
    <property type="entry name" value="Thiolase-like"/>
</dbReference>
<dbReference type="NCBIfam" id="TIGR01733">
    <property type="entry name" value="AA-adenyl-dom"/>
    <property type="match status" value="1"/>
</dbReference>
<dbReference type="PANTHER" id="PTHR45527:SF1">
    <property type="entry name" value="FATTY ACID SYNTHASE"/>
    <property type="match status" value="1"/>
</dbReference>
<dbReference type="PANTHER" id="PTHR45527">
    <property type="entry name" value="NONRIBOSOMAL PEPTIDE SYNTHETASE"/>
    <property type="match status" value="1"/>
</dbReference>
<dbReference type="Pfam" id="PF00501">
    <property type="entry name" value="AMP-binding"/>
    <property type="match status" value="1"/>
</dbReference>
<dbReference type="Pfam" id="PF00668">
    <property type="entry name" value="Condensation"/>
    <property type="match status" value="1"/>
</dbReference>
<dbReference type="Pfam" id="PF00109">
    <property type="entry name" value="ketoacyl-synt"/>
    <property type="match status" value="1"/>
</dbReference>
<dbReference type="Pfam" id="PF02801">
    <property type="entry name" value="Ketoacyl-synt_C"/>
    <property type="match status" value="1"/>
</dbReference>
<dbReference type="Pfam" id="PF00550">
    <property type="entry name" value="PP-binding"/>
    <property type="match status" value="1"/>
</dbReference>
<dbReference type="SMART" id="SM00825">
    <property type="entry name" value="PKS_KS"/>
    <property type="match status" value="1"/>
</dbReference>
<dbReference type="SUPFAM" id="SSF56801">
    <property type="entry name" value="Acetyl-CoA synthetase-like"/>
    <property type="match status" value="1"/>
</dbReference>
<dbReference type="SUPFAM" id="SSF47336">
    <property type="entry name" value="ACP-like"/>
    <property type="match status" value="1"/>
</dbReference>
<dbReference type="SUPFAM" id="SSF52777">
    <property type="entry name" value="CoA-dependent acyltransferases"/>
    <property type="match status" value="2"/>
</dbReference>
<dbReference type="SUPFAM" id="SSF53901">
    <property type="entry name" value="Thiolase-like"/>
    <property type="match status" value="1"/>
</dbReference>
<dbReference type="PROSITE" id="PS00455">
    <property type="entry name" value="AMP_BINDING"/>
    <property type="match status" value="1"/>
</dbReference>
<dbReference type="PROSITE" id="PS50075">
    <property type="entry name" value="CARRIER"/>
    <property type="match status" value="1"/>
</dbReference>
<dbReference type="PROSITE" id="PS00606">
    <property type="entry name" value="KS3_1"/>
    <property type="match status" value="1"/>
</dbReference>
<dbReference type="PROSITE" id="PS52004">
    <property type="entry name" value="KS3_2"/>
    <property type="match status" value="1"/>
</dbReference>
<dbReference type="PROSITE" id="PS00012">
    <property type="entry name" value="PHOSPHOPANTETHEINE"/>
    <property type="match status" value="1"/>
</dbReference>